<name>Y064_MYCTO</name>
<accession>P9WFL4</accession>
<accession>L0T5K5</accession>
<accession>O53609</accession>
<keyword id="KW-1003">Cell membrane</keyword>
<keyword id="KW-0472">Membrane</keyword>
<keyword id="KW-1185">Reference proteome</keyword>
<keyword id="KW-0812">Transmembrane</keyword>
<keyword id="KW-1133">Transmembrane helix</keyword>
<proteinExistence type="inferred from homology"/>
<comment type="subcellular location">
    <subcellularLocation>
        <location evidence="1">Cell membrane</location>
        <topology evidence="1">Multi-pass membrane protein</topology>
    </subcellularLocation>
</comment>
<comment type="similarity">
    <text evidence="1">Belongs to the UPF0182 family.</text>
</comment>
<feature type="chain" id="PRO_0000428518" description="UPF0182 protein MT0070">
    <location>
        <begin position="1"/>
        <end position="979"/>
    </location>
</feature>
<feature type="transmembrane region" description="Helical" evidence="1">
    <location>
        <begin position="19"/>
        <end position="41"/>
    </location>
</feature>
<feature type="transmembrane region" description="Helical" evidence="1">
    <location>
        <begin position="63"/>
        <end position="85"/>
    </location>
</feature>
<feature type="transmembrane region" description="Helical" evidence="1">
    <location>
        <begin position="114"/>
        <end position="136"/>
    </location>
</feature>
<feature type="transmembrane region" description="Helical" evidence="1">
    <location>
        <begin position="174"/>
        <end position="196"/>
    </location>
</feature>
<feature type="transmembrane region" description="Helical" evidence="1">
    <location>
        <begin position="208"/>
        <end position="230"/>
    </location>
</feature>
<feature type="transmembrane region" description="Helical" evidence="1">
    <location>
        <begin position="261"/>
        <end position="280"/>
    </location>
</feature>
<feature type="transmembrane region" description="Helical" evidence="1">
    <location>
        <begin position="285"/>
        <end position="307"/>
    </location>
</feature>
<feature type="region of interest" description="Disordered" evidence="2">
    <location>
        <begin position="894"/>
        <end position="948"/>
    </location>
</feature>
<feature type="compositionally biased region" description="Pro residues" evidence="2">
    <location>
        <begin position="913"/>
        <end position="946"/>
    </location>
</feature>
<dbReference type="EMBL" id="AE000516">
    <property type="protein sequence ID" value="AAK44294.1"/>
    <property type="molecule type" value="Genomic_DNA"/>
</dbReference>
<dbReference type="PIR" id="A70848">
    <property type="entry name" value="A70848"/>
</dbReference>
<dbReference type="RefSeq" id="WP_010924181.1">
    <property type="nucleotide sequence ID" value="NC_002755.2"/>
</dbReference>
<dbReference type="KEGG" id="mtc:MT0070"/>
<dbReference type="HOGENOM" id="CLU_007733_1_0_11"/>
<dbReference type="Proteomes" id="UP000001020">
    <property type="component" value="Chromosome"/>
</dbReference>
<dbReference type="GO" id="GO:0005576">
    <property type="term" value="C:extracellular region"/>
    <property type="evidence" value="ECO:0007669"/>
    <property type="project" value="TreeGrafter"/>
</dbReference>
<dbReference type="GO" id="GO:0005886">
    <property type="term" value="C:plasma membrane"/>
    <property type="evidence" value="ECO:0007669"/>
    <property type="project" value="UniProtKB-SubCell"/>
</dbReference>
<dbReference type="HAMAP" id="MF_01600">
    <property type="entry name" value="UPF0182"/>
    <property type="match status" value="1"/>
</dbReference>
<dbReference type="InterPro" id="IPR005372">
    <property type="entry name" value="UPF0182"/>
</dbReference>
<dbReference type="NCBIfam" id="NF000825">
    <property type="entry name" value="PRK00068.1"/>
    <property type="match status" value="1"/>
</dbReference>
<dbReference type="NCBIfam" id="NF009097">
    <property type="entry name" value="PRK12438.1"/>
    <property type="match status" value="1"/>
</dbReference>
<dbReference type="PANTHER" id="PTHR39344">
    <property type="entry name" value="UPF0182 PROTEIN SLL1060"/>
    <property type="match status" value="1"/>
</dbReference>
<dbReference type="PANTHER" id="PTHR39344:SF1">
    <property type="entry name" value="UPF0182 PROTEIN SLL1060"/>
    <property type="match status" value="1"/>
</dbReference>
<dbReference type="Pfam" id="PF03699">
    <property type="entry name" value="UPF0182"/>
    <property type="match status" value="1"/>
</dbReference>
<protein>
    <recommendedName>
        <fullName evidence="1">UPF0182 protein MT0070</fullName>
    </recommendedName>
</protein>
<gene>
    <name type="ordered locus">MT0070</name>
</gene>
<evidence type="ECO:0000255" key="1">
    <source>
        <dbReference type="HAMAP-Rule" id="MF_01600"/>
    </source>
</evidence>
<evidence type="ECO:0000256" key="2">
    <source>
        <dbReference type="SAM" id="MobiDB-lite"/>
    </source>
</evidence>
<reference key="1">
    <citation type="journal article" date="2002" name="J. Bacteriol.">
        <title>Whole-genome comparison of Mycobacterium tuberculosis clinical and laboratory strains.</title>
        <authorList>
            <person name="Fleischmann R.D."/>
            <person name="Alland D."/>
            <person name="Eisen J.A."/>
            <person name="Carpenter L."/>
            <person name="White O."/>
            <person name="Peterson J.D."/>
            <person name="DeBoy R.T."/>
            <person name="Dodson R.J."/>
            <person name="Gwinn M.L."/>
            <person name="Haft D.H."/>
            <person name="Hickey E.K."/>
            <person name="Kolonay J.F."/>
            <person name="Nelson W.C."/>
            <person name="Umayam L.A."/>
            <person name="Ermolaeva M.D."/>
            <person name="Salzberg S.L."/>
            <person name="Delcher A."/>
            <person name="Utterback T.R."/>
            <person name="Weidman J.F."/>
            <person name="Khouri H.M."/>
            <person name="Gill J."/>
            <person name="Mikula A."/>
            <person name="Bishai W."/>
            <person name="Jacobs W.R. Jr."/>
            <person name="Venter J.C."/>
            <person name="Fraser C.M."/>
        </authorList>
    </citation>
    <scope>NUCLEOTIDE SEQUENCE [LARGE SCALE GENOMIC DNA]</scope>
    <source>
        <strain>CDC 1551 / Oshkosh</strain>
    </source>
</reference>
<organism>
    <name type="scientific">Mycobacterium tuberculosis (strain CDC 1551 / Oshkosh)</name>
    <dbReference type="NCBI Taxonomy" id="83331"/>
    <lineage>
        <taxon>Bacteria</taxon>
        <taxon>Bacillati</taxon>
        <taxon>Actinomycetota</taxon>
        <taxon>Actinomycetes</taxon>
        <taxon>Mycobacteriales</taxon>
        <taxon>Mycobacteriaceae</taxon>
        <taxon>Mycobacterium</taxon>
        <taxon>Mycobacterium tuberculosis complex</taxon>
    </lineage>
</organism>
<sequence>METGSPGKRPVLPKRARLLVTAGMGMLALLLFGPRLVDIYVDWLWFGEVGFRSVWITVLLTRLAIVAAVALVVAGIVLAALLLAYRSRPFFVPDEPQRDPVAPLRSAVMRRPRLFGWGIAVTLGVVCGLIASFDWVKVQLFVHGGTFGIVDPEFGYDIGFFVFDLPFYRSVLNWLFVAVVLAFLASLLTHYLFGGLRLTTGRGMLTQAARVQLAVFAGAVVLLKAVAYWLDRYELLSSGRKEPTFTGAGYTDIHAELPAKLVLVAIAVLCAVSFFTAIFLRDLRIPAMAAALLVLSAILVGGLWPLLMEQFSVRPNAADVERPYIQRNIEATREAYRIGGDWVQYRSYPGIGTKQPRDVPVDVTTIAKVRLLDPHILSRTFTQQQQLKNFFSFAEILDIDRYRIDGELQDYIVGVREFSPKSLTGNQTDWINKHTVYTHGNGFVAAPANRVNAAARDAENISDSNSGYPIYAVSDIASLGSGRQVIPVEQPRVYYGEVIAQADPDYAIVGGAPGSAPREYDTDTSKYTYTGAGGVSIGNWFNRTVFATKVAQHKFLFSREIGSESKVLIHRDPKERVQRVAPWLTTDDNPYPVVVNGRIVWIVDAYTTLDTYPYAQRSSLEGPVTSPTGIVRQGKQVSYVRNSVKATVDAYDGTVTLFQFDRDDPVLRTWMRAFPGTVKSEDQIPDELRAHFRYPEDLFEVQRSLLAKYHVDEPREFFTTNAFWSVPSDPTNDANATQPPFYVLVGDQQSAQPSFRLASAMVGYNREFLSAYISAHSDPANYGKLTVLELPTDTLTQGPQQIQNSMISDTRVASERTLLERSNRIHYGNLLSLPIADGGVLYVEPLYTERISTSPSSSTFPQLSRVLVSVREPRTEGGVRVGYAPTLAESLDQVFGPGTGRVATXPGGDAASAPPPGAGGPAPPQGVPPPRTTQPPAAPPRGPDVPPATVAELRETLADLRAVLDRLEKAIDAAETPGG</sequence>